<name>RF1_PARXL</name>
<sequence length="360" mass="40353">MKTSMQRKLDQLTTRLAELNDLLSREDITSNLDQYRKLTREHAELGPVVEHYALWRQAMNDAATAQELLADASMRDFAEEEIRAARERMDKLGAELQKMLLPKDPNDDRNIFLEIRAGTGGDESALFAGDLLRMYLRYAERNRWQVEMMSASESDLGGYKEVIVRIAGEAAYSKLKFESGGHRVQRVPATETQGRIHTSACTVAVMPEADEIGEVEINPADLRIDTFRASGAGGQHINKTDSAVRVTHLPTGIVVECQDDRSQHKNKDRALKVLAARIKDKQSHEQQAKEAATRKSLIGSGDRSERIRTYNFPQGRLTDHRINLTLYRLDAIMDGDLDELIAALVSEHQAELLASLGDAD</sequence>
<reference key="1">
    <citation type="journal article" date="2006" name="Proc. Natl. Acad. Sci. U.S.A.">
        <title>Burkholderia xenovorans LB400 harbors a multi-replicon, 9.73-Mbp genome shaped for versatility.</title>
        <authorList>
            <person name="Chain P.S.G."/>
            <person name="Denef V.J."/>
            <person name="Konstantinidis K.T."/>
            <person name="Vergez L.M."/>
            <person name="Agullo L."/>
            <person name="Reyes V.L."/>
            <person name="Hauser L."/>
            <person name="Cordova M."/>
            <person name="Gomez L."/>
            <person name="Gonzalez M."/>
            <person name="Land M."/>
            <person name="Lao V."/>
            <person name="Larimer F."/>
            <person name="LiPuma J.J."/>
            <person name="Mahenthiralingam E."/>
            <person name="Malfatti S.A."/>
            <person name="Marx C.J."/>
            <person name="Parnell J.J."/>
            <person name="Ramette A."/>
            <person name="Richardson P."/>
            <person name="Seeger M."/>
            <person name="Smith D."/>
            <person name="Spilker T."/>
            <person name="Sul W.J."/>
            <person name="Tsoi T.V."/>
            <person name="Ulrich L.E."/>
            <person name="Zhulin I.B."/>
            <person name="Tiedje J.M."/>
        </authorList>
    </citation>
    <scope>NUCLEOTIDE SEQUENCE [LARGE SCALE GENOMIC DNA]</scope>
    <source>
        <strain>LB400</strain>
    </source>
</reference>
<dbReference type="EMBL" id="CP000270">
    <property type="protein sequence ID" value="ABE32497.1"/>
    <property type="molecule type" value="Genomic_DNA"/>
</dbReference>
<dbReference type="RefSeq" id="WP_011489964.1">
    <property type="nucleotide sequence ID" value="NZ_CP008760.1"/>
</dbReference>
<dbReference type="SMR" id="Q13TU2"/>
<dbReference type="STRING" id="266265.Bxe_A0436"/>
<dbReference type="KEGG" id="bxb:DR64_2607"/>
<dbReference type="KEGG" id="bxe:Bxe_A0436"/>
<dbReference type="PATRIC" id="fig|266265.5.peg.4182"/>
<dbReference type="eggNOG" id="COG0216">
    <property type="taxonomic scope" value="Bacteria"/>
</dbReference>
<dbReference type="OrthoDB" id="9806673at2"/>
<dbReference type="Proteomes" id="UP000001817">
    <property type="component" value="Chromosome 1"/>
</dbReference>
<dbReference type="GO" id="GO:0005737">
    <property type="term" value="C:cytoplasm"/>
    <property type="evidence" value="ECO:0007669"/>
    <property type="project" value="UniProtKB-SubCell"/>
</dbReference>
<dbReference type="GO" id="GO:0016149">
    <property type="term" value="F:translation release factor activity, codon specific"/>
    <property type="evidence" value="ECO:0007669"/>
    <property type="project" value="UniProtKB-UniRule"/>
</dbReference>
<dbReference type="FunFam" id="3.30.160.20:FF:000004">
    <property type="entry name" value="Peptide chain release factor 1"/>
    <property type="match status" value="1"/>
</dbReference>
<dbReference type="FunFam" id="3.30.70.1660:FF:000002">
    <property type="entry name" value="Peptide chain release factor 1"/>
    <property type="match status" value="1"/>
</dbReference>
<dbReference type="FunFam" id="3.30.70.1660:FF:000004">
    <property type="entry name" value="Peptide chain release factor 1"/>
    <property type="match status" value="1"/>
</dbReference>
<dbReference type="Gene3D" id="3.30.160.20">
    <property type="match status" value="1"/>
</dbReference>
<dbReference type="Gene3D" id="3.30.70.1660">
    <property type="match status" value="2"/>
</dbReference>
<dbReference type="Gene3D" id="6.10.140.1950">
    <property type="match status" value="1"/>
</dbReference>
<dbReference type="HAMAP" id="MF_00093">
    <property type="entry name" value="Rel_fac_1"/>
    <property type="match status" value="1"/>
</dbReference>
<dbReference type="InterPro" id="IPR005139">
    <property type="entry name" value="PCRF"/>
</dbReference>
<dbReference type="InterPro" id="IPR000352">
    <property type="entry name" value="Pep_chain_release_fac_I"/>
</dbReference>
<dbReference type="InterPro" id="IPR045853">
    <property type="entry name" value="Pep_chain_release_fac_I_sf"/>
</dbReference>
<dbReference type="InterPro" id="IPR050057">
    <property type="entry name" value="Prokaryotic/Mito_RF"/>
</dbReference>
<dbReference type="InterPro" id="IPR004373">
    <property type="entry name" value="RF-1"/>
</dbReference>
<dbReference type="NCBIfam" id="TIGR00019">
    <property type="entry name" value="prfA"/>
    <property type="match status" value="1"/>
</dbReference>
<dbReference type="NCBIfam" id="NF001859">
    <property type="entry name" value="PRK00591.1"/>
    <property type="match status" value="1"/>
</dbReference>
<dbReference type="PANTHER" id="PTHR43804">
    <property type="entry name" value="LD18447P"/>
    <property type="match status" value="1"/>
</dbReference>
<dbReference type="PANTHER" id="PTHR43804:SF7">
    <property type="entry name" value="LD18447P"/>
    <property type="match status" value="1"/>
</dbReference>
<dbReference type="Pfam" id="PF03462">
    <property type="entry name" value="PCRF"/>
    <property type="match status" value="1"/>
</dbReference>
<dbReference type="Pfam" id="PF00472">
    <property type="entry name" value="RF-1"/>
    <property type="match status" value="1"/>
</dbReference>
<dbReference type="SMART" id="SM00937">
    <property type="entry name" value="PCRF"/>
    <property type="match status" value="1"/>
</dbReference>
<dbReference type="SUPFAM" id="SSF75620">
    <property type="entry name" value="Release factor"/>
    <property type="match status" value="1"/>
</dbReference>
<dbReference type="PROSITE" id="PS00745">
    <property type="entry name" value="RF_PROK_I"/>
    <property type="match status" value="1"/>
</dbReference>
<feature type="chain" id="PRO_0000263248" description="Peptide chain release factor 1">
    <location>
        <begin position="1"/>
        <end position="360"/>
    </location>
</feature>
<feature type="region of interest" description="Disordered" evidence="2">
    <location>
        <begin position="280"/>
        <end position="300"/>
    </location>
</feature>
<feature type="compositionally biased region" description="Basic and acidic residues" evidence="2">
    <location>
        <begin position="280"/>
        <end position="293"/>
    </location>
</feature>
<feature type="modified residue" description="N5-methylglutamine" evidence="1">
    <location>
        <position position="235"/>
    </location>
</feature>
<evidence type="ECO:0000255" key="1">
    <source>
        <dbReference type="HAMAP-Rule" id="MF_00093"/>
    </source>
</evidence>
<evidence type="ECO:0000256" key="2">
    <source>
        <dbReference type="SAM" id="MobiDB-lite"/>
    </source>
</evidence>
<comment type="function">
    <text evidence="1">Peptide chain release factor 1 directs the termination of translation in response to the peptide chain termination codons UAG and UAA.</text>
</comment>
<comment type="subcellular location">
    <subcellularLocation>
        <location evidence="1">Cytoplasm</location>
    </subcellularLocation>
</comment>
<comment type="PTM">
    <text evidence="1">Methylated by PrmC. Methylation increases the termination efficiency of RF1.</text>
</comment>
<comment type="similarity">
    <text evidence="1">Belongs to the prokaryotic/mitochondrial release factor family.</text>
</comment>
<protein>
    <recommendedName>
        <fullName evidence="1">Peptide chain release factor 1</fullName>
        <shortName evidence="1">RF-1</shortName>
    </recommendedName>
</protein>
<proteinExistence type="inferred from homology"/>
<gene>
    <name evidence="1" type="primary">prfA</name>
    <name type="ordered locus">Bxeno_A3959</name>
    <name type="ORF">Bxe_A0436</name>
</gene>
<accession>Q13TU2</accession>
<organism>
    <name type="scientific">Paraburkholderia xenovorans (strain LB400)</name>
    <dbReference type="NCBI Taxonomy" id="266265"/>
    <lineage>
        <taxon>Bacteria</taxon>
        <taxon>Pseudomonadati</taxon>
        <taxon>Pseudomonadota</taxon>
        <taxon>Betaproteobacteria</taxon>
        <taxon>Burkholderiales</taxon>
        <taxon>Burkholderiaceae</taxon>
        <taxon>Paraburkholderia</taxon>
    </lineage>
</organism>
<keyword id="KW-0963">Cytoplasm</keyword>
<keyword id="KW-0488">Methylation</keyword>
<keyword id="KW-0648">Protein biosynthesis</keyword>
<keyword id="KW-1185">Reference proteome</keyword>